<protein>
    <recommendedName>
        <fullName>Gustatory receptor for bitter taste 22e</fullName>
    </recommendedName>
</protein>
<organism>
    <name type="scientific">Drosophila melanogaster</name>
    <name type="common">Fruit fly</name>
    <dbReference type="NCBI Taxonomy" id="7227"/>
    <lineage>
        <taxon>Eukaryota</taxon>
        <taxon>Metazoa</taxon>
        <taxon>Ecdysozoa</taxon>
        <taxon>Arthropoda</taxon>
        <taxon>Hexapoda</taxon>
        <taxon>Insecta</taxon>
        <taxon>Pterygota</taxon>
        <taxon>Neoptera</taxon>
        <taxon>Endopterygota</taxon>
        <taxon>Diptera</taxon>
        <taxon>Brachycera</taxon>
        <taxon>Muscomorpha</taxon>
        <taxon>Ephydroidea</taxon>
        <taxon>Drosophilidae</taxon>
        <taxon>Drosophila</taxon>
        <taxon>Sophophora</taxon>
    </lineage>
</organism>
<comment type="function">
    <text evidence="5">Gustatory receptor which mediates acceptance or avoidance behavior, depending on its substrates. Seems to be involved in the sensing of bitter taste since it is expressed in neurons that mediate sensitivity to bitter compounds which are also avoidance-type taste neurons.</text>
</comment>
<comment type="subcellular location">
    <subcellularLocation>
        <location evidence="1">Cell membrane</location>
        <topology evidence="1">Multi-pass membrane protein</topology>
    </subcellularLocation>
</comment>
<comment type="tissue specificity">
    <text evidence="3 4 5 6">Taste bristles on the labial palp, labral and cibarial sense organs, chemosensory bristles on the leg and anterior wing margin. In larvae, is expressed in neurons of the terminal external chemosensory organ and in the dorsal pharyngeal sense organ. Neurons expressing Gr22e also express Gr66a and correspond to taste neurons that mediate sensitivity to bitter compounds.</text>
</comment>
<comment type="similarity">
    <text evidence="7">Belongs to the insect chemoreceptor superfamily. Gustatory receptor (GR) family. Gr22e subfamily.</text>
</comment>
<gene>
    <name type="primary">Gr22e</name>
    <name type="ORF">CG31936</name>
</gene>
<proteinExistence type="evidence at transcript level"/>
<keyword id="KW-1003">Cell membrane</keyword>
<keyword id="KW-0325">Glycoprotein</keyword>
<keyword id="KW-0472">Membrane</keyword>
<keyword id="KW-0675">Receptor</keyword>
<keyword id="KW-1185">Reference proteome</keyword>
<keyword id="KW-0807">Transducer</keyword>
<keyword id="KW-0812">Transmembrane</keyword>
<keyword id="KW-1133">Transmembrane helix</keyword>
<name>GR22E_DROME</name>
<accession>P58953</accession>
<evidence type="ECO:0000250" key="1"/>
<evidence type="ECO:0000255" key="2"/>
<evidence type="ECO:0000269" key="3">
    <source>
    </source>
</evidence>
<evidence type="ECO:0000269" key="4">
    <source>
    </source>
</evidence>
<evidence type="ECO:0000269" key="5">
    <source>
    </source>
</evidence>
<evidence type="ECO:0000269" key="6">
    <source>
    </source>
</evidence>
<evidence type="ECO:0000305" key="7"/>
<reference key="1">
    <citation type="journal article" date="2000" name="Science">
        <title>The genome sequence of Drosophila melanogaster.</title>
        <authorList>
            <person name="Adams M.D."/>
            <person name="Celniker S.E."/>
            <person name="Holt R.A."/>
            <person name="Evans C.A."/>
            <person name="Gocayne J.D."/>
            <person name="Amanatides P.G."/>
            <person name="Scherer S.E."/>
            <person name="Li P.W."/>
            <person name="Hoskins R.A."/>
            <person name="Galle R.F."/>
            <person name="George R.A."/>
            <person name="Lewis S.E."/>
            <person name="Richards S."/>
            <person name="Ashburner M."/>
            <person name="Henderson S.N."/>
            <person name="Sutton G.G."/>
            <person name="Wortman J.R."/>
            <person name="Yandell M.D."/>
            <person name="Zhang Q."/>
            <person name="Chen L.X."/>
            <person name="Brandon R.C."/>
            <person name="Rogers Y.-H.C."/>
            <person name="Blazej R.G."/>
            <person name="Champe M."/>
            <person name="Pfeiffer B.D."/>
            <person name="Wan K.H."/>
            <person name="Doyle C."/>
            <person name="Baxter E.G."/>
            <person name="Helt G."/>
            <person name="Nelson C.R."/>
            <person name="Miklos G.L.G."/>
            <person name="Abril J.F."/>
            <person name="Agbayani A."/>
            <person name="An H.-J."/>
            <person name="Andrews-Pfannkoch C."/>
            <person name="Baldwin D."/>
            <person name="Ballew R.M."/>
            <person name="Basu A."/>
            <person name="Baxendale J."/>
            <person name="Bayraktaroglu L."/>
            <person name="Beasley E.M."/>
            <person name="Beeson K.Y."/>
            <person name="Benos P.V."/>
            <person name="Berman B.P."/>
            <person name="Bhandari D."/>
            <person name="Bolshakov S."/>
            <person name="Borkova D."/>
            <person name="Botchan M.R."/>
            <person name="Bouck J."/>
            <person name="Brokstein P."/>
            <person name="Brottier P."/>
            <person name="Burtis K.C."/>
            <person name="Busam D.A."/>
            <person name="Butler H."/>
            <person name="Cadieu E."/>
            <person name="Center A."/>
            <person name="Chandra I."/>
            <person name="Cherry J.M."/>
            <person name="Cawley S."/>
            <person name="Dahlke C."/>
            <person name="Davenport L.B."/>
            <person name="Davies P."/>
            <person name="de Pablos B."/>
            <person name="Delcher A."/>
            <person name="Deng Z."/>
            <person name="Mays A.D."/>
            <person name="Dew I."/>
            <person name="Dietz S.M."/>
            <person name="Dodson K."/>
            <person name="Doup L.E."/>
            <person name="Downes M."/>
            <person name="Dugan-Rocha S."/>
            <person name="Dunkov B.C."/>
            <person name="Dunn P."/>
            <person name="Durbin K.J."/>
            <person name="Evangelista C.C."/>
            <person name="Ferraz C."/>
            <person name="Ferriera S."/>
            <person name="Fleischmann W."/>
            <person name="Fosler C."/>
            <person name="Gabrielian A.E."/>
            <person name="Garg N.S."/>
            <person name="Gelbart W.M."/>
            <person name="Glasser K."/>
            <person name="Glodek A."/>
            <person name="Gong F."/>
            <person name="Gorrell J.H."/>
            <person name="Gu Z."/>
            <person name="Guan P."/>
            <person name="Harris M."/>
            <person name="Harris N.L."/>
            <person name="Harvey D.A."/>
            <person name="Heiman T.J."/>
            <person name="Hernandez J.R."/>
            <person name="Houck J."/>
            <person name="Hostin D."/>
            <person name="Houston K.A."/>
            <person name="Howland T.J."/>
            <person name="Wei M.-H."/>
            <person name="Ibegwam C."/>
            <person name="Jalali M."/>
            <person name="Kalush F."/>
            <person name="Karpen G.H."/>
            <person name="Ke Z."/>
            <person name="Kennison J.A."/>
            <person name="Ketchum K.A."/>
            <person name="Kimmel B.E."/>
            <person name="Kodira C.D."/>
            <person name="Kraft C.L."/>
            <person name="Kravitz S."/>
            <person name="Kulp D."/>
            <person name="Lai Z."/>
            <person name="Lasko P."/>
            <person name="Lei Y."/>
            <person name="Levitsky A.A."/>
            <person name="Li J.H."/>
            <person name="Li Z."/>
            <person name="Liang Y."/>
            <person name="Lin X."/>
            <person name="Liu X."/>
            <person name="Mattei B."/>
            <person name="McIntosh T.C."/>
            <person name="McLeod M.P."/>
            <person name="McPherson D."/>
            <person name="Merkulov G."/>
            <person name="Milshina N.V."/>
            <person name="Mobarry C."/>
            <person name="Morris J."/>
            <person name="Moshrefi A."/>
            <person name="Mount S.M."/>
            <person name="Moy M."/>
            <person name="Murphy B."/>
            <person name="Murphy L."/>
            <person name="Muzny D.M."/>
            <person name="Nelson D.L."/>
            <person name="Nelson D.R."/>
            <person name="Nelson K.A."/>
            <person name="Nixon K."/>
            <person name="Nusskern D.R."/>
            <person name="Pacleb J.M."/>
            <person name="Palazzolo M."/>
            <person name="Pittman G.S."/>
            <person name="Pan S."/>
            <person name="Pollard J."/>
            <person name="Puri V."/>
            <person name="Reese M.G."/>
            <person name="Reinert K."/>
            <person name="Remington K."/>
            <person name="Saunders R.D.C."/>
            <person name="Scheeler F."/>
            <person name="Shen H."/>
            <person name="Shue B.C."/>
            <person name="Siden-Kiamos I."/>
            <person name="Simpson M."/>
            <person name="Skupski M.P."/>
            <person name="Smith T.J."/>
            <person name="Spier E."/>
            <person name="Spradling A.C."/>
            <person name="Stapleton M."/>
            <person name="Strong R."/>
            <person name="Sun E."/>
            <person name="Svirskas R."/>
            <person name="Tector C."/>
            <person name="Turner R."/>
            <person name="Venter E."/>
            <person name="Wang A.H."/>
            <person name="Wang X."/>
            <person name="Wang Z.-Y."/>
            <person name="Wassarman D.A."/>
            <person name="Weinstock G.M."/>
            <person name="Weissenbach J."/>
            <person name="Williams S.M."/>
            <person name="Woodage T."/>
            <person name="Worley K.C."/>
            <person name="Wu D."/>
            <person name="Yang S."/>
            <person name="Yao Q.A."/>
            <person name="Ye J."/>
            <person name="Yeh R.-F."/>
            <person name="Zaveri J.S."/>
            <person name="Zhan M."/>
            <person name="Zhang G."/>
            <person name="Zhao Q."/>
            <person name="Zheng L."/>
            <person name="Zheng X.H."/>
            <person name="Zhong F.N."/>
            <person name="Zhong W."/>
            <person name="Zhou X."/>
            <person name="Zhu S.C."/>
            <person name="Zhu X."/>
            <person name="Smith H.O."/>
            <person name="Gibbs R.A."/>
            <person name="Myers E.W."/>
            <person name="Rubin G.M."/>
            <person name="Venter J.C."/>
        </authorList>
    </citation>
    <scope>NUCLEOTIDE SEQUENCE [LARGE SCALE GENOMIC DNA]</scope>
    <source>
        <strain>Berkeley</strain>
    </source>
</reference>
<reference key="2">
    <citation type="journal article" date="2002" name="Genome Biol.">
        <title>Annotation of the Drosophila melanogaster euchromatic genome: a systematic review.</title>
        <authorList>
            <person name="Misra S."/>
            <person name="Crosby M.A."/>
            <person name="Mungall C.J."/>
            <person name="Matthews B.B."/>
            <person name="Campbell K.S."/>
            <person name="Hradecky P."/>
            <person name="Huang Y."/>
            <person name="Kaminker J.S."/>
            <person name="Millburn G.H."/>
            <person name="Prochnik S.E."/>
            <person name="Smith C.D."/>
            <person name="Tupy J.L."/>
            <person name="Whitfield E.J."/>
            <person name="Bayraktaroglu L."/>
            <person name="Berman B.P."/>
            <person name="Bettencourt B.R."/>
            <person name="Celniker S.E."/>
            <person name="de Grey A.D.N.J."/>
            <person name="Drysdale R.A."/>
            <person name="Harris N.L."/>
            <person name="Richter J."/>
            <person name="Russo S."/>
            <person name="Schroeder A.J."/>
            <person name="Shu S.Q."/>
            <person name="Stapleton M."/>
            <person name="Yamada C."/>
            <person name="Ashburner M."/>
            <person name="Gelbart W.M."/>
            <person name="Rubin G.M."/>
            <person name="Lewis S.E."/>
        </authorList>
    </citation>
    <scope>GENOME REANNOTATION</scope>
    <source>
        <strain>Berkeley</strain>
    </source>
</reference>
<reference key="3">
    <citation type="journal article" date="2001" name="Curr. Biol.">
        <title>Spatially restricted expression of candidate taste receptors in the Drosophila gustatory system.</title>
        <authorList>
            <person name="Dunipace L."/>
            <person name="Meister S."/>
            <person name="McNealy C."/>
            <person name="Amrein H."/>
        </authorList>
    </citation>
    <scope>IDENTIFICATION</scope>
    <scope>TISSUE SPECIFICITY</scope>
</reference>
<reference key="4">
    <citation type="journal article" date="2003" name="Neuron">
        <title>A putative Drosophila pheromone receptor expressed in male-specific taste neurons is required for efficient courtship.</title>
        <authorList>
            <person name="Bray S."/>
            <person name="Amrein H."/>
        </authorList>
    </citation>
    <scope>TISSUE SPECIFICITY</scope>
</reference>
<reference key="5">
    <citation type="journal article" date="2008" name="J. Comp. Neurol.">
        <title>Atypical expression of Drosophila gustatory receptor genes in sensory and central neurons.</title>
        <authorList>
            <person name="Thorne N."/>
            <person name="Amrein H."/>
        </authorList>
    </citation>
    <scope>FUNCTION</scope>
    <scope>TISSUE SPECIFICITY</scope>
</reference>
<reference key="6">
    <citation type="journal article" date="2011" name="J. Neurosci.">
        <title>Molecular and cellular organization of the taste system in the Drosophila larva.</title>
        <authorList>
            <person name="Kwon J.Y."/>
            <person name="Dahanukar A."/>
            <person name="Weiss L.A."/>
            <person name="Carlson J.R."/>
        </authorList>
    </citation>
    <scope>TISSUE SPECIFICITY</scope>
</reference>
<dbReference type="EMBL" id="AE014134">
    <property type="protein sequence ID" value="AAN10462.1"/>
    <property type="molecule type" value="Genomic_DNA"/>
</dbReference>
<dbReference type="RefSeq" id="NP_722731.1">
    <property type="nucleotide sequence ID" value="NM_164438.1"/>
</dbReference>
<dbReference type="SMR" id="P58953"/>
<dbReference type="BioGRID" id="72918">
    <property type="interactions" value="1"/>
</dbReference>
<dbReference type="FunCoup" id="P58953">
    <property type="interactions" value="18"/>
</dbReference>
<dbReference type="IntAct" id="P58953">
    <property type="interactions" value="1"/>
</dbReference>
<dbReference type="STRING" id="7227.FBpp0077556"/>
<dbReference type="GlyCosmos" id="P58953">
    <property type="glycosylation" value="2 sites, No reported glycans"/>
</dbReference>
<dbReference type="GlyGen" id="P58953">
    <property type="glycosylation" value="2 sites"/>
</dbReference>
<dbReference type="PaxDb" id="7227-FBpp0077556"/>
<dbReference type="EnsemblMetazoa" id="FBtr0077888">
    <property type="protein sequence ID" value="FBpp0077556"/>
    <property type="gene ID" value="FBgn0045497"/>
</dbReference>
<dbReference type="GeneID" id="117498"/>
<dbReference type="KEGG" id="dme:Dmel_CG31936"/>
<dbReference type="AGR" id="FB:FBgn0045497"/>
<dbReference type="CTD" id="117498"/>
<dbReference type="FlyBase" id="FBgn0045497">
    <property type="gene designation" value="Gr22e"/>
</dbReference>
<dbReference type="VEuPathDB" id="VectorBase:FBgn0045497"/>
<dbReference type="eggNOG" id="ENOG502T94A">
    <property type="taxonomic scope" value="Eukaryota"/>
</dbReference>
<dbReference type="GeneTree" id="ENSGT00940000166130"/>
<dbReference type="HOGENOM" id="CLU_033758_0_0_1"/>
<dbReference type="InParanoid" id="P58953"/>
<dbReference type="OMA" id="MGFRMAI"/>
<dbReference type="OrthoDB" id="8067175at2759"/>
<dbReference type="PhylomeDB" id="P58953"/>
<dbReference type="BioGRID-ORCS" id="117498">
    <property type="hits" value="0 hits in 1 CRISPR screen"/>
</dbReference>
<dbReference type="GenomeRNAi" id="117498"/>
<dbReference type="PRO" id="PR:P58953"/>
<dbReference type="Proteomes" id="UP000000803">
    <property type="component" value="Chromosome 2L"/>
</dbReference>
<dbReference type="GO" id="GO:0030424">
    <property type="term" value="C:axon"/>
    <property type="evidence" value="ECO:0000318"/>
    <property type="project" value="GO_Central"/>
</dbReference>
<dbReference type="GO" id="GO:0030425">
    <property type="term" value="C:dendrite"/>
    <property type="evidence" value="ECO:0000318"/>
    <property type="project" value="GO_Central"/>
</dbReference>
<dbReference type="GO" id="GO:0016020">
    <property type="term" value="C:membrane"/>
    <property type="evidence" value="ECO:0000303"/>
    <property type="project" value="UniProtKB"/>
</dbReference>
<dbReference type="GO" id="GO:0043025">
    <property type="term" value="C:neuronal cell body"/>
    <property type="evidence" value="ECO:0000318"/>
    <property type="project" value="GO_Central"/>
</dbReference>
<dbReference type="GO" id="GO:0005886">
    <property type="term" value="C:plasma membrane"/>
    <property type="evidence" value="ECO:0000250"/>
    <property type="project" value="FlyBase"/>
</dbReference>
<dbReference type="GO" id="GO:0015276">
    <property type="term" value="F:ligand-gated monoatomic ion channel activity"/>
    <property type="evidence" value="ECO:0000250"/>
    <property type="project" value="FlyBase"/>
</dbReference>
<dbReference type="GO" id="GO:0008527">
    <property type="term" value="F:taste receptor activity"/>
    <property type="evidence" value="ECO:0000303"/>
    <property type="project" value="UniProtKB"/>
</dbReference>
<dbReference type="GO" id="GO:0034220">
    <property type="term" value="P:monoatomic ion transmembrane transport"/>
    <property type="evidence" value="ECO:0000250"/>
    <property type="project" value="FlyBase"/>
</dbReference>
<dbReference type="GO" id="GO:0050909">
    <property type="term" value="P:sensory perception of taste"/>
    <property type="evidence" value="ECO:0000303"/>
    <property type="project" value="UniProtKB"/>
</dbReference>
<dbReference type="GO" id="GO:0007165">
    <property type="term" value="P:signal transduction"/>
    <property type="evidence" value="ECO:0007669"/>
    <property type="project" value="UniProtKB-KW"/>
</dbReference>
<dbReference type="InterPro" id="IPR013604">
    <property type="entry name" value="7TM_chemorcpt"/>
</dbReference>
<dbReference type="PANTHER" id="PTHR21143:SF131">
    <property type="entry name" value="GUSTATORY AND ODORANT RECEPTOR 63A-RELATED"/>
    <property type="match status" value="1"/>
</dbReference>
<dbReference type="PANTHER" id="PTHR21143">
    <property type="entry name" value="INVERTEBRATE GUSTATORY RECEPTOR"/>
    <property type="match status" value="1"/>
</dbReference>
<dbReference type="Pfam" id="PF08395">
    <property type="entry name" value="7tm_7"/>
    <property type="match status" value="1"/>
</dbReference>
<sequence length="389" mass="45560">MFRPSGSGYRQKWTGLTLKGALYGSWILGVFPFAYDSWTRTLRRSKWLIAYGFVLNAAFILLVVTNDTESETPLRMEVFHRNALAEQINGIHDIQSLSMVSIMLLRSFWKSGDIERTLNELEDLQHRYFRNYSLEECISFDRFVLYKGFSVVLELVSMLVLELGMSPNYSAQFFIGLGSLCLMLLAVLLGASHFHLAVVFVYRYVWIVNRELLKLVNKMAIGETVESERMDLLLYLYHRLLDLGQRLASIYDYQMVMVMVSFLIANVLGIYFFIIYSISLNKSLDFKILVFVQALVINMLDFWLNVEICELAERTGRQTSTILKLFNDIENIDEKLERSITDFALFCSHRRLRFHHCGLFYVNYEMGFRMAITSFLYLLFLIQFDYWNL</sequence>
<feature type="chain" id="PRO_0000216497" description="Gustatory receptor for bitter taste 22e">
    <location>
        <begin position="1"/>
        <end position="389"/>
    </location>
</feature>
<feature type="topological domain" description="Cytoplasmic" evidence="1">
    <location>
        <begin position="1"/>
        <end position="14"/>
    </location>
</feature>
<feature type="transmembrane region" description="Helical; Name=1" evidence="2">
    <location>
        <begin position="15"/>
        <end position="35"/>
    </location>
</feature>
<feature type="topological domain" description="Extracellular" evidence="1">
    <location>
        <begin position="36"/>
        <end position="46"/>
    </location>
</feature>
<feature type="transmembrane region" description="Helical; Name=2" evidence="2">
    <location>
        <begin position="47"/>
        <end position="67"/>
    </location>
</feature>
<feature type="topological domain" description="Cytoplasmic" evidence="1">
    <location>
        <begin position="68"/>
        <end position="142"/>
    </location>
</feature>
<feature type="transmembrane region" description="Helical; Name=3" evidence="2">
    <location>
        <begin position="143"/>
        <end position="163"/>
    </location>
</feature>
<feature type="topological domain" description="Extracellular" evidence="1">
    <location>
        <begin position="164"/>
        <end position="170"/>
    </location>
</feature>
<feature type="transmembrane region" description="Helical; Name=4" evidence="2">
    <location>
        <begin position="171"/>
        <end position="191"/>
    </location>
</feature>
<feature type="topological domain" description="Cytoplasmic" evidence="1">
    <location>
        <begin position="192"/>
        <end position="254"/>
    </location>
</feature>
<feature type="transmembrane region" description="Helical; Name=5" evidence="2">
    <location>
        <begin position="255"/>
        <end position="275"/>
    </location>
</feature>
<feature type="topological domain" description="Extracellular" evidence="1">
    <location>
        <begin position="276"/>
        <end position="287"/>
    </location>
</feature>
<feature type="transmembrane region" description="Helical; Name=6" evidence="2">
    <location>
        <begin position="288"/>
        <end position="308"/>
    </location>
</feature>
<feature type="topological domain" description="Cytoplasmic" evidence="1">
    <location>
        <begin position="309"/>
        <end position="366"/>
    </location>
</feature>
<feature type="transmembrane region" description="Helical; Name=7" evidence="2">
    <location>
        <begin position="367"/>
        <end position="387"/>
    </location>
</feature>
<feature type="topological domain" description="Extracellular" evidence="1">
    <location>
        <begin position="388"/>
        <end position="389"/>
    </location>
</feature>
<feature type="glycosylation site" description="N-linked (GlcNAc...) asparagine" evidence="2">
    <location>
        <position position="168"/>
    </location>
</feature>
<feature type="glycosylation site" description="N-linked (GlcNAc...) asparagine" evidence="2">
    <location>
        <position position="281"/>
    </location>
</feature>